<accession>Q9UWW9</accession>
<gene>
    <name evidence="1" type="primary">atpD</name>
    <name type="ordered locus">SSO0566</name>
</gene>
<comment type="function">
    <text evidence="1">Component of the A-type ATP synthase that produces ATP from ADP in the presence of a proton gradient across the membrane.</text>
</comment>
<comment type="subunit">
    <text evidence="1">Has multiple subunits with at least A(3), B(3), C, D, E, F, H, I and proteolipid K(x).</text>
</comment>
<comment type="subcellular location">
    <subcellularLocation>
        <location evidence="1">Cell membrane</location>
        <topology evidence="1">Peripheral membrane protein</topology>
    </subcellularLocation>
</comment>
<comment type="similarity">
    <text evidence="1">Belongs to the V-ATPase D subunit family.</text>
</comment>
<proteinExistence type="inferred from homology"/>
<protein>
    <recommendedName>
        <fullName evidence="1">A-type ATP synthase subunit D</fullName>
    </recommendedName>
</protein>
<reference key="1">
    <citation type="journal article" date="2000" name="Genome">
        <title>Gene content and organization of a 281-kbp contig from the genome of the extremely thermophilic archaeon, Sulfolobus solfataricus P2.</title>
        <authorList>
            <person name="Charlebois R.L."/>
            <person name="Singh R.K."/>
            <person name="Chan-Weiher C.C.-Y."/>
            <person name="Allard G."/>
            <person name="Chow C."/>
            <person name="Confalonieri F."/>
            <person name="Curtis B."/>
            <person name="Duguet M."/>
            <person name="Erauso G."/>
            <person name="Faguy D."/>
            <person name="Gaasterland T."/>
            <person name="Garrett R.A."/>
            <person name="Gordon P."/>
            <person name="Jeffries A.C."/>
            <person name="Kozera C."/>
            <person name="Kushwaha N."/>
            <person name="Lafleur E."/>
            <person name="Medina N."/>
            <person name="Peng X."/>
            <person name="Penny S.L."/>
            <person name="She Q."/>
            <person name="St Jean A."/>
            <person name="van der Oost J."/>
            <person name="Young F."/>
            <person name="Zivanovic Y."/>
            <person name="Doolittle W.F."/>
            <person name="Ragan M.A."/>
            <person name="Sensen C.W."/>
        </authorList>
    </citation>
    <scope>NUCLEOTIDE SEQUENCE [LARGE SCALE GENOMIC DNA]</scope>
    <source>
        <strain>ATCC 35092 / DSM 1617 / JCM 11322 / P2</strain>
    </source>
</reference>
<reference key="2">
    <citation type="journal article" date="2001" name="Proc. Natl. Acad. Sci. U.S.A.">
        <title>The complete genome of the crenarchaeon Sulfolobus solfataricus P2.</title>
        <authorList>
            <person name="She Q."/>
            <person name="Singh R.K."/>
            <person name="Confalonieri F."/>
            <person name="Zivanovic Y."/>
            <person name="Allard G."/>
            <person name="Awayez M.J."/>
            <person name="Chan-Weiher C.C.-Y."/>
            <person name="Clausen I.G."/>
            <person name="Curtis B.A."/>
            <person name="De Moors A."/>
            <person name="Erauso G."/>
            <person name="Fletcher C."/>
            <person name="Gordon P.M.K."/>
            <person name="Heikamp-de Jong I."/>
            <person name="Jeffries A.C."/>
            <person name="Kozera C.J."/>
            <person name="Medina N."/>
            <person name="Peng X."/>
            <person name="Thi-Ngoc H.P."/>
            <person name="Redder P."/>
            <person name="Schenk M.E."/>
            <person name="Theriault C."/>
            <person name="Tolstrup N."/>
            <person name="Charlebois R.L."/>
            <person name="Doolittle W.F."/>
            <person name="Duguet M."/>
            <person name="Gaasterland T."/>
            <person name="Garrett R.A."/>
            <person name="Ragan M.A."/>
            <person name="Sensen C.W."/>
            <person name="Van der Oost J."/>
        </authorList>
    </citation>
    <scope>NUCLEOTIDE SEQUENCE [LARGE SCALE GENOMIC DNA]</scope>
    <source>
        <strain>ATCC 35092 / DSM 1617 / JCM 11322 / P2</strain>
    </source>
</reference>
<dbReference type="EMBL" id="Y18930">
    <property type="protein sequence ID" value="CAB57734.1"/>
    <property type="molecule type" value="Genomic_DNA"/>
</dbReference>
<dbReference type="EMBL" id="AE006641">
    <property type="protein sequence ID" value="AAK40881.1"/>
    <property type="molecule type" value="Genomic_DNA"/>
</dbReference>
<dbReference type="PIR" id="B90203">
    <property type="entry name" value="B90203"/>
</dbReference>
<dbReference type="RefSeq" id="WP_009991078.1">
    <property type="nucleotide sequence ID" value="NC_002754.1"/>
</dbReference>
<dbReference type="SMR" id="Q9UWW9"/>
<dbReference type="FunCoup" id="Q9UWW9">
    <property type="interactions" value="258"/>
</dbReference>
<dbReference type="STRING" id="273057.SSO0566"/>
<dbReference type="PaxDb" id="273057-SSO0566"/>
<dbReference type="EnsemblBacteria" id="AAK40881">
    <property type="protein sequence ID" value="AAK40881"/>
    <property type="gene ID" value="SSO0566"/>
</dbReference>
<dbReference type="KEGG" id="sso:SSO0566"/>
<dbReference type="PATRIC" id="fig|273057.12.peg.574"/>
<dbReference type="eggNOG" id="arCOG04101">
    <property type="taxonomic scope" value="Archaea"/>
</dbReference>
<dbReference type="HOGENOM" id="CLU_069688_2_2_2"/>
<dbReference type="InParanoid" id="Q9UWW9"/>
<dbReference type="PhylomeDB" id="Q9UWW9"/>
<dbReference type="Proteomes" id="UP000001974">
    <property type="component" value="Chromosome"/>
</dbReference>
<dbReference type="GO" id="GO:0005886">
    <property type="term" value="C:plasma membrane"/>
    <property type="evidence" value="ECO:0007669"/>
    <property type="project" value="UniProtKB-SubCell"/>
</dbReference>
<dbReference type="GO" id="GO:0033176">
    <property type="term" value="C:proton-transporting V-type ATPase complex"/>
    <property type="evidence" value="ECO:0000318"/>
    <property type="project" value="GO_Central"/>
</dbReference>
<dbReference type="GO" id="GO:0005524">
    <property type="term" value="F:ATP binding"/>
    <property type="evidence" value="ECO:0007669"/>
    <property type="project" value="UniProtKB-UniRule"/>
</dbReference>
<dbReference type="GO" id="GO:0046933">
    <property type="term" value="F:proton-transporting ATP synthase activity, rotational mechanism"/>
    <property type="evidence" value="ECO:0007669"/>
    <property type="project" value="UniProtKB-UniRule"/>
</dbReference>
<dbReference type="GO" id="GO:0046961">
    <property type="term" value="F:proton-transporting ATPase activity, rotational mechanism"/>
    <property type="evidence" value="ECO:0007669"/>
    <property type="project" value="InterPro"/>
</dbReference>
<dbReference type="GO" id="GO:0042777">
    <property type="term" value="P:proton motive force-driven plasma membrane ATP synthesis"/>
    <property type="evidence" value="ECO:0007669"/>
    <property type="project" value="UniProtKB-UniRule"/>
</dbReference>
<dbReference type="FunFam" id="1.10.287.3240:FF:000012">
    <property type="entry name" value="V-type ATP synthase subunit D"/>
    <property type="match status" value="1"/>
</dbReference>
<dbReference type="Gene3D" id="1.10.287.3240">
    <property type="match status" value="1"/>
</dbReference>
<dbReference type="HAMAP" id="MF_00271">
    <property type="entry name" value="ATP_synth_D_arch"/>
    <property type="match status" value="1"/>
</dbReference>
<dbReference type="InterPro" id="IPR002699">
    <property type="entry name" value="V_ATPase_D"/>
</dbReference>
<dbReference type="NCBIfam" id="NF001544">
    <property type="entry name" value="PRK00373.1-3"/>
    <property type="match status" value="1"/>
</dbReference>
<dbReference type="NCBIfam" id="TIGR00309">
    <property type="entry name" value="V_ATPase_subD"/>
    <property type="match status" value="1"/>
</dbReference>
<dbReference type="PANTHER" id="PTHR11671">
    <property type="entry name" value="V-TYPE ATP SYNTHASE SUBUNIT D"/>
    <property type="match status" value="1"/>
</dbReference>
<dbReference type="Pfam" id="PF01813">
    <property type="entry name" value="ATP-synt_D"/>
    <property type="match status" value="1"/>
</dbReference>
<keyword id="KW-0066">ATP synthesis</keyword>
<keyword id="KW-1003">Cell membrane</keyword>
<keyword id="KW-0375">Hydrogen ion transport</keyword>
<keyword id="KW-0406">Ion transport</keyword>
<keyword id="KW-0472">Membrane</keyword>
<keyword id="KW-1185">Reference proteome</keyword>
<keyword id="KW-0813">Transport</keyword>
<name>AATD_SACS2</name>
<sequence length="213" mass="25092">MSQKVLPTKINLIQFRRQLRLITVIKRLLENKREVLLLYLRTYASQYEKIYNEVNEEMKKVYESYLQAVASEGISNIEEMALSQKPSLEVNSAIKVIFGVKVPTIRLDKSTIPAKPFSDVETSPYLSESYEEMTEALNKIIELVELESTIRSLVSELRKTQRLINSIDNYILPFYRGSIKFIKQILEDRQREEFSRLKIIRRILQRRRESGSR</sequence>
<organism>
    <name type="scientific">Saccharolobus solfataricus (strain ATCC 35092 / DSM 1617 / JCM 11322 / P2)</name>
    <name type="common">Sulfolobus solfataricus</name>
    <dbReference type="NCBI Taxonomy" id="273057"/>
    <lineage>
        <taxon>Archaea</taxon>
        <taxon>Thermoproteota</taxon>
        <taxon>Thermoprotei</taxon>
        <taxon>Sulfolobales</taxon>
        <taxon>Sulfolobaceae</taxon>
        <taxon>Saccharolobus</taxon>
    </lineage>
</organism>
<evidence type="ECO:0000255" key="1">
    <source>
        <dbReference type="HAMAP-Rule" id="MF_00271"/>
    </source>
</evidence>
<feature type="chain" id="PRO_0000144259" description="A-type ATP synthase subunit D">
    <location>
        <begin position="1"/>
        <end position="213"/>
    </location>
</feature>